<protein>
    <recommendedName>
        <fullName evidence="3">Lactamase-like protein nscB</fullName>
        <ecNumber evidence="5">3.1.-.-</ecNumber>
    </recommendedName>
    <alternativeName>
        <fullName evidence="3">Neosartoricin biosynthesis protein B</fullName>
    </alternativeName>
</protein>
<comment type="function">
    <text evidence="5 6">Lactamase-like protein; part of the gene cluster that mediates the biosynthesis of neosartoricin, a prenylated anthracenone that exhibits T-cell antiproliferative activity, suggestive of a physiological role as an immunosuppressive agent (PubMed:23368997, PubMed:23758576). The non-reducing polyketide synthase nscA probably synthesizes and cyclizes the decaketide backbone (PubMed:23368997). The hydrolase nscB then mediates the product release through hydrolysis followed by spontaneous decarboxylation (PubMed:23368997). The prenyltransferase nscD catalyzes the addition of the dimethylallyl group to the aromatic C5 (PubMed:23368997). The FAD-dependent monooxygenase nscC is then responsible for the stereospecific hydroxylation at C2 (PubMed:23368997). There is no gene encoding O-acetyltransferase in the nsc gene cluster; thus, the last step of 2-O-acetylation leading to neosartoricin may be catalyzed by an unidentified O-acetyltransferase (PubMed:23368997).</text>
</comment>
<comment type="cofactor">
    <cofactor evidence="1">
        <name>Zn(2+)</name>
        <dbReference type="ChEBI" id="CHEBI:29105"/>
    </cofactor>
    <text evidence="1">Binds 2 Zn(2+) ions per subunit.</text>
</comment>
<comment type="pathway">
    <text evidence="5">Secondary metabolite biosynthesis.</text>
</comment>
<comment type="similarity">
    <text evidence="4">Belongs to the metallo-beta-lactamase superfamily.</text>
</comment>
<dbReference type="EC" id="3.1.-.-" evidence="5"/>
<dbReference type="EMBL" id="AAHF01000015">
    <property type="protein sequence ID" value="EAL84878.1"/>
    <property type="molecule type" value="Genomic_DNA"/>
</dbReference>
<dbReference type="RefSeq" id="XP_746916.1">
    <property type="nucleotide sequence ID" value="XM_741823.1"/>
</dbReference>
<dbReference type="SMR" id="Q4WA58"/>
<dbReference type="STRING" id="330879.Q4WA58"/>
<dbReference type="EnsemblFungi" id="EAL84878">
    <property type="protein sequence ID" value="EAL84878"/>
    <property type="gene ID" value="AFUA_7G00120"/>
</dbReference>
<dbReference type="GeneID" id="3504313"/>
<dbReference type="KEGG" id="afm:AFUA_7G00120"/>
<dbReference type="VEuPathDB" id="FungiDB:Afu7g00120"/>
<dbReference type="eggNOG" id="KOG0813">
    <property type="taxonomic scope" value="Eukaryota"/>
</dbReference>
<dbReference type="HOGENOM" id="CLU_048478_1_0_1"/>
<dbReference type="InParanoid" id="Q4WA58"/>
<dbReference type="OMA" id="PAKLIVW"/>
<dbReference type="OrthoDB" id="17458at2759"/>
<dbReference type="Proteomes" id="UP000002530">
    <property type="component" value="Chromosome 7"/>
</dbReference>
<dbReference type="GO" id="GO:0016787">
    <property type="term" value="F:hydrolase activity"/>
    <property type="evidence" value="ECO:0007669"/>
    <property type="project" value="UniProtKB-KW"/>
</dbReference>
<dbReference type="GO" id="GO:0046872">
    <property type="term" value="F:metal ion binding"/>
    <property type="evidence" value="ECO:0007669"/>
    <property type="project" value="UniProtKB-KW"/>
</dbReference>
<dbReference type="GO" id="GO:0044550">
    <property type="term" value="P:secondary metabolite biosynthetic process"/>
    <property type="evidence" value="ECO:0000318"/>
    <property type="project" value="GO_Central"/>
</dbReference>
<dbReference type="CDD" id="cd07722">
    <property type="entry name" value="LACTB2-like_MBL-fold"/>
    <property type="match status" value="1"/>
</dbReference>
<dbReference type="FunFam" id="1.10.10.10:FF:001025">
    <property type="entry name" value="Lactamase-like protein nscB"/>
    <property type="match status" value="1"/>
</dbReference>
<dbReference type="FunFam" id="3.60.15.10:FF:000041">
    <property type="entry name" value="Metallo-beta-lactamase domain protein"/>
    <property type="match status" value="1"/>
</dbReference>
<dbReference type="Gene3D" id="3.60.15.10">
    <property type="entry name" value="Ribonuclease Z/Hydroxyacylglutathione hydrolase-like"/>
    <property type="match status" value="1"/>
</dbReference>
<dbReference type="Gene3D" id="1.10.10.10">
    <property type="entry name" value="Winged helix-like DNA-binding domain superfamily/Winged helix DNA-binding domain"/>
    <property type="match status" value="1"/>
</dbReference>
<dbReference type="InterPro" id="IPR047921">
    <property type="entry name" value="LACTB2-like_MBL-fold"/>
</dbReference>
<dbReference type="InterPro" id="IPR001279">
    <property type="entry name" value="Metallo-B-lactamas"/>
</dbReference>
<dbReference type="InterPro" id="IPR036866">
    <property type="entry name" value="RibonucZ/Hydroxyglut_hydro"/>
</dbReference>
<dbReference type="InterPro" id="IPR050662">
    <property type="entry name" value="Sec-metab_biosynth-thioest"/>
</dbReference>
<dbReference type="InterPro" id="IPR036388">
    <property type="entry name" value="WH-like_DNA-bd_sf"/>
</dbReference>
<dbReference type="PANTHER" id="PTHR23131">
    <property type="entry name" value="ENDORIBONUCLEASE LACTB2"/>
    <property type="match status" value="1"/>
</dbReference>
<dbReference type="PANTHER" id="PTHR23131:SF2">
    <property type="entry name" value="LACTAMASE-LIKE PROTEIN APTB-RELATED"/>
    <property type="match status" value="1"/>
</dbReference>
<dbReference type="Pfam" id="PF00753">
    <property type="entry name" value="Lactamase_B"/>
    <property type="match status" value="1"/>
</dbReference>
<dbReference type="SMART" id="SM00849">
    <property type="entry name" value="Lactamase_B"/>
    <property type="match status" value="1"/>
</dbReference>
<dbReference type="SUPFAM" id="SSF56281">
    <property type="entry name" value="Metallo-hydrolase/oxidoreductase"/>
    <property type="match status" value="1"/>
</dbReference>
<reference key="1">
    <citation type="journal article" date="2005" name="Nature">
        <title>Genomic sequence of the pathogenic and allergenic filamentous fungus Aspergillus fumigatus.</title>
        <authorList>
            <person name="Nierman W.C."/>
            <person name="Pain A."/>
            <person name="Anderson M.J."/>
            <person name="Wortman J.R."/>
            <person name="Kim H.S."/>
            <person name="Arroyo J."/>
            <person name="Berriman M."/>
            <person name="Abe K."/>
            <person name="Archer D.B."/>
            <person name="Bermejo C."/>
            <person name="Bennett J.W."/>
            <person name="Bowyer P."/>
            <person name="Chen D."/>
            <person name="Collins M."/>
            <person name="Coulsen R."/>
            <person name="Davies R."/>
            <person name="Dyer P.S."/>
            <person name="Farman M.L."/>
            <person name="Fedorova N."/>
            <person name="Fedorova N.D."/>
            <person name="Feldblyum T.V."/>
            <person name="Fischer R."/>
            <person name="Fosker N."/>
            <person name="Fraser A."/>
            <person name="Garcia J.L."/>
            <person name="Garcia M.J."/>
            <person name="Goble A."/>
            <person name="Goldman G.H."/>
            <person name="Gomi K."/>
            <person name="Griffith-Jones S."/>
            <person name="Gwilliam R."/>
            <person name="Haas B.J."/>
            <person name="Haas H."/>
            <person name="Harris D.E."/>
            <person name="Horiuchi H."/>
            <person name="Huang J."/>
            <person name="Humphray S."/>
            <person name="Jimenez J."/>
            <person name="Keller N."/>
            <person name="Khouri H."/>
            <person name="Kitamoto K."/>
            <person name="Kobayashi T."/>
            <person name="Konzack S."/>
            <person name="Kulkarni R."/>
            <person name="Kumagai T."/>
            <person name="Lafton A."/>
            <person name="Latge J.-P."/>
            <person name="Li W."/>
            <person name="Lord A."/>
            <person name="Lu C."/>
            <person name="Majoros W.H."/>
            <person name="May G.S."/>
            <person name="Miller B.L."/>
            <person name="Mohamoud Y."/>
            <person name="Molina M."/>
            <person name="Monod M."/>
            <person name="Mouyna I."/>
            <person name="Mulligan S."/>
            <person name="Murphy L.D."/>
            <person name="O'Neil S."/>
            <person name="Paulsen I."/>
            <person name="Penalva M.A."/>
            <person name="Pertea M."/>
            <person name="Price C."/>
            <person name="Pritchard B.L."/>
            <person name="Quail M.A."/>
            <person name="Rabbinowitsch E."/>
            <person name="Rawlins N."/>
            <person name="Rajandream M.A."/>
            <person name="Reichard U."/>
            <person name="Renauld H."/>
            <person name="Robson G.D."/>
            <person name="Rodriguez de Cordoba S."/>
            <person name="Rodriguez-Pena J.M."/>
            <person name="Ronning C.M."/>
            <person name="Rutter S."/>
            <person name="Salzberg S.L."/>
            <person name="Sanchez M."/>
            <person name="Sanchez-Ferrero J.C."/>
            <person name="Saunders D."/>
            <person name="Seeger K."/>
            <person name="Squares R."/>
            <person name="Squares S."/>
            <person name="Takeuchi M."/>
            <person name="Tekaia F."/>
            <person name="Turner G."/>
            <person name="Vazquez de Aldana C.R."/>
            <person name="Weidman J."/>
            <person name="White O."/>
            <person name="Woodward J.R."/>
            <person name="Yu J.-H."/>
            <person name="Fraser C.M."/>
            <person name="Galagan J.E."/>
            <person name="Asai K."/>
            <person name="Machida M."/>
            <person name="Hall N."/>
            <person name="Barrell B.G."/>
            <person name="Denning D.W."/>
        </authorList>
    </citation>
    <scope>NUCLEOTIDE SEQUENCE [LARGE SCALE GENOMIC DNA]</scope>
    <source>
        <strain>ATCC MYA-4609 / CBS 101355 / FGSC A1100 / Af293</strain>
    </source>
</reference>
<reference key="2">
    <citation type="journal article" date="2013" name="ACS Synth. Biol.">
        <title>Discovery of cryptic polyketide metabolites from dermatophytes using heterologous expression in Aspergillus nidulans.</title>
        <authorList>
            <person name="Yin W.B."/>
            <person name="Chooi Y.H."/>
            <person name="Smith A.R."/>
            <person name="Cacho R.A."/>
            <person name="Hu Y."/>
            <person name="White T.C."/>
            <person name="Tang Y."/>
        </authorList>
    </citation>
    <scope>FUNCTION</scope>
</reference>
<reference key="3">
    <citation type="journal article" date="2013" name="Org. Lett.">
        <title>Genome mining of a prenylated and immunosuppressive polyketide from pathogenic fungi.</title>
        <authorList>
            <person name="Chooi Y.H."/>
            <person name="Fang J."/>
            <person name="Liu H."/>
            <person name="Filler S.G."/>
            <person name="Wang P."/>
            <person name="Tang Y."/>
        </authorList>
    </citation>
    <scope>FUNCTION</scope>
</reference>
<name>NSCB_ASPFU</name>
<proteinExistence type="inferred from homology"/>
<gene>
    <name evidence="3" type="primary">nscB</name>
    <name type="ORF">AFUA_7G00120</name>
</gene>
<sequence length="330" mass="36492">MALRMPFNQAFWEEYLSGQDATLPSLPDTSTLTSRVIRILGGNPGAMHLQGTNTYLVGTGPSRILIDTGQGLPIWLSRIVGVLQSNNISISHILLTHWHGDHTGGVPDLISYNPTLAEHVYKNLPDLGQKPIEDGQIFAVEGATVRAVFTPGHSVDHMCFLLEEENALFTGDNVLGHGFSVAPDLGRYMESLELMAKLGCVIGYPAHGAVIDDLPSKLEEYIRHKEMRVQGILSVLVKERERVEGERGKEGRRKGGMTLHEIARAMFGTVPDEVIDQAMAPFLMQALWKLTEDGKVGFEPGDPVKRKWFAVARRKTRPSIRRQHGSVTSR</sequence>
<accession>Q4WA58</accession>
<evidence type="ECO:0000250" key="1">
    <source>
        <dbReference type="UniProtKB" id="Q988B9"/>
    </source>
</evidence>
<evidence type="ECO:0000255" key="2"/>
<evidence type="ECO:0000303" key="3">
    <source>
    </source>
</evidence>
<evidence type="ECO:0000305" key="4"/>
<evidence type="ECO:0000305" key="5">
    <source>
    </source>
</evidence>
<evidence type="ECO:0000305" key="6">
    <source>
    </source>
</evidence>
<organism>
    <name type="scientific">Aspergillus fumigatus (strain ATCC MYA-4609 / CBS 101355 / FGSC A1100 / Af293)</name>
    <name type="common">Neosartorya fumigata</name>
    <dbReference type="NCBI Taxonomy" id="330879"/>
    <lineage>
        <taxon>Eukaryota</taxon>
        <taxon>Fungi</taxon>
        <taxon>Dikarya</taxon>
        <taxon>Ascomycota</taxon>
        <taxon>Pezizomycotina</taxon>
        <taxon>Eurotiomycetes</taxon>
        <taxon>Eurotiomycetidae</taxon>
        <taxon>Eurotiales</taxon>
        <taxon>Aspergillaceae</taxon>
        <taxon>Aspergillus</taxon>
        <taxon>Aspergillus subgen. Fumigati</taxon>
    </lineage>
</organism>
<keyword id="KW-0378">Hydrolase</keyword>
<keyword id="KW-0479">Metal-binding</keyword>
<keyword id="KW-1185">Reference proteome</keyword>
<keyword id="KW-0862">Zinc</keyword>
<feature type="chain" id="PRO_0000437896" description="Lactamase-like protein nscB">
    <location>
        <begin position="1"/>
        <end position="330"/>
    </location>
</feature>
<feature type="active site" description="Proton donor/acceptor" evidence="2">
    <location>
        <position position="101"/>
    </location>
</feature>
<feature type="binding site" evidence="1">
    <location>
        <position position="97"/>
    </location>
    <ligand>
        <name>Zn(2+)</name>
        <dbReference type="ChEBI" id="CHEBI:29105"/>
        <label>1</label>
        <note>catalytic</note>
    </ligand>
</feature>
<feature type="binding site" evidence="1">
    <location>
        <position position="99"/>
    </location>
    <ligand>
        <name>Zn(2+)</name>
        <dbReference type="ChEBI" id="CHEBI:29105"/>
        <label>1</label>
        <note>catalytic</note>
    </ligand>
</feature>
<feature type="binding site" evidence="1">
    <location>
        <position position="101"/>
    </location>
    <ligand>
        <name>Zn(2+)</name>
        <dbReference type="ChEBI" id="CHEBI:29105"/>
        <label>2</label>
        <note>catalytic</note>
    </ligand>
</feature>
<feature type="binding site" evidence="1">
    <location>
        <position position="102"/>
    </location>
    <ligand>
        <name>Zn(2+)</name>
        <dbReference type="ChEBI" id="CHEBI:29105"/>
        <label>2</label>
        <note>catalytic</note>
    </ligand>
</feature>